<accession>A8GJ06</accession>
<protein>
    <recommendedName>
        <fullName evidence="1">Polyamine aminopropyltransferase</fullName>
    </recommendedName>
    <alternativeName>
        <fullName evidence="1">Putrescine aminopropyltransferase</fullName>
        <shortName evidence="1">PAPT</shortName>
    </alternativeName>
    <alternativeName>
        <fullName evidence="1">Spermidine synthase</fullName>
        <shortName evidence="1">SPDS</shortName>
        <shortName evidence="1">SPDSY</shortName>
        <ecNumber evidence="1">2.5.1.16</ecNumber>
    </alternativeName>
</protein>
<comment type="function">
    <text evidence="1">Catalyzes the irreversible transfer of a propylamine group from the amino donor S-adenosylmethioninamine (decarboxy-AdoMet) to putrescine (1,4-diaminobutane) to yield spermidine.</text>
</comment>
<comment type="catalytic activity">
    <reaction evidence="1">
        <text>S-adenosyl 3-(methylsulfanyl)propylamine + putrescine = S-methyl-5'-thioadenosine + spermidine + H(+)</text>
        <dbReference type="Rhea" id="RHEA:12721"/>
        <dbReference type="ChEBI" id="CHEBI:15378"/>
        <dbReference type="ChEBI" id="CHEBI:17509"/>
        <dbReference type="ChEBI" id="CHEBI:57443"/>
        <dbReference type="ChEBI" id="CHEBI:57834"/>
        <dbReference type="ChEBI" id="CHEBI:326268"/>
        <dbReference type="EC" id="2.5.1.16"/>
    </reaction>
</comment>
<comment type="pathway">
    <text evidence="1">Amine and polyamine biosynthesis; spermidine biosynthesis; spermidine from putrescine: step 1/1.</text>
</comment>
<comment type="subunit">
    <text evidence="1">Homodimer or homotetramer.</text>
</comment>
<comment type="subcellular location">
    <subcellularLocation>
        <location evidence="1">Cytoplasm</location>
    </subcellularLocation>
</comment>
<comment type="similarity">
    <text evidence="1">Belongs to the spermidine/spermine synthase family.</text>
</comment>
<gene>
    <name evidence="1" type="primary">speE</name>
    <name type="ordered locus">Spro_4001</name>
</gene>
<name>SPEE_SERP5</name>
<proteinExistence type="inferred from homology"/>
<dbReference type="EC" id="2.5.1.16" evidence="1"/>
<dbReference type="EMBL" id="CP000826">
    <property type="protein sequence ID" value="ABV43096.1"/>
    <property type="molecule type" value="Genomic_DNA"/>
</dbReference>
<dbReference type="SMR" id="A8GJ06"/>
<dbReference type="STRING" id="399741.Spro_4001"/>
<dbReference type="KEGG" id="spe:Spro_4001"/>
<dbReference type="eggNOG" id="COG0421">
    <property type="taxonomic scope" value="Bacteria"/>
</dbReference>
<dbReference type="HOGENOM" id="CLU_048199_0_0_6"/>
<dbReference type="OrthoDB" id="9793120at2"/>
<dbReference type="UniPathway" id="UPA00248">
    <property type="reaction ID" value="UER00314"/>
</dbReference>
<dbReference type="GO" id="GO:0005829">
    <property type="term" value="C:cytosol"/>
    <property type="evidence" value="ECO:0007669"/>
    <property type="project" value="TreeGrafter"/>
</dbReference>
<dbReference type="GO" id="GO:0004766">
    <property type="term" value="F:spermidine synthase activity"/>
    <property type="evidence" value="ECO:0007669"/>
    <property type="project" value="UniProtKB-UniRule"/>
</dbReference>
<dbReference type="GO" id="GO:0008295">
    <property type="term" value="P:spermidine biosynthetic process"/>
    <property type="evidence" value="ECO:0007669"/>
    <property type="project" value="UniProtKB-UniRule"/>
</dbReference>
<dbReference type="CDD" id="cd02440">
    <property type="entry name" value="AdoMet_MTases"/>
    <property type="match status" value="1"/>
</dbReference>
<dbReference type="FunFam" id="2.30.140.10:FF:000002">
    <property type="entry name" value="Polyamine aminopropyltransferase"/>
    <property type="match status" value="1"/>
</dbReference>
<dbReference type="FunFam" id="3.40.50.150:FF:000026">
    <property type="entry name" value="Polyamine aminopropyltransferase"/>
    <property type="match status" value="1"/>
</dbReference>
<dbReference type="Gene3D" id="2.30.140.10">
    <property type="entry name" value="Spermidine synthase, tetramerisation domain"/>
    <property type="match status" value="1"/>
</dbReference>
<dbReference type="Gene3D" id="3.40.50.150">
    <property type="entry name" value="Vaccinia Virus protein VP39"/>
    <property type="match status" value="1"/>
</dbReference>
<dbReference type="HAMAP" id="MF_00198">
    <property type="entry name" value="Spermidine_synth"/>
    <property type="match status" value="1"/>
</dbReference>
<dbReference type="InterPro" id="IPR030374">
    <property type="entry name" value="PABS"/>
</dbReference>
<dbReference type="InterPro" id="IPR030373">
    <property type="entry name" value="PABS_CS"/>
</dbReference>
<dbReference type="InterPro" id="IPR029063">
    <property type="entry name" value="SAM-dependent_MTases_sf"/>
</dbReference>
<dbReference type="InterPro" id="IPR001045">
    <property type="entry name" value="Spermi_synthase"/>
</dbReference>
<dbReference type="InterPro" id="IPR035246">
    <property type="entry name" value="Spermidine_synt_N"/>
</dbReference>
<dbReference type="InterPro" id="IPR037163">
    <property type="entry name" value="Spermidine_synt_N_sf"/>
</dbReference>
<dbReference type="NCBIfam" id="NF037959">
    <property type="entry name" value="MFS_SpdSyn"/>
    <property type="match status" value="1"/>
</dbReference>
<dbReference type="NCBIfam" id="NF002010">
    <property type="entry name" value="PRK00811.1"/>
    <property type="match status" value="1"/>
</dbReference>
<dbReference type="NCBIfam" id="TIGR00417">
    <property type="entry name" value="speE"/>
    <property type="match status" value="1"/>
</dbReference>
<dbReference type="PANTHER" id="PTHR11558:SF11">
    <property type="entry name" value="SPERMIDINE SYNTHASE"/>
    <property type="match status" value="1"/>
</dbReference>
<dbReference type="PANTHER" id="PTHR11558">
    <property type="entry name" value="SPERMIDINE/SPERMINE SYNTHASE"/>
    <property type="match status" value="1"/>
</dbReference>
<dbReference type="Pfam" id="PF17284">
    <property type="entry name" value="Spermine_synt_N"/>
    <property type="match status" value="1"/>
</dbReference>
<dbReference type="Pfam" id="PF01564">
    <property type="entry name" value="Spermine_synth"/>
    <property type="match status" value="1"/>
</dbReference>
<dbReference type="SUPFAM" id="SSF53335">
    <property type="entry name" value="S-adenosyl-L-methionine-dependent methyltransferases"/>
    <property type="match status" value="1"/>
</dbReference>
<dbReference type="PROSITE" id="PS01330">
    <property type="entry name" value="PABS_1"/>
    <property type="match status" value="1"/>
</dbReference>
<dbReference type="PROSITE" id="PS51006">
    <property type="entry name" value="PABS_2"/>
    <property type="match status" value="1"/>
</dbReference>
<organism>
    <name type="scientific">Serratia proteamaculans (strain 568)</name>
    <dbReference type="NCBI Taxonomy" id="399741"/>
    <lineage>
        <taxon>Bacteria</taxon>
        <taxon>Pseudomonadati</taxon>
        <taxon>Pseudomonadota</taxon>
        <taxon>Gammaproteobacteria</taxon>
        <taxon>Enterobacterales</taxon>
        <taxon>Yersiniaceae</taxon>
        <taxon>Serratia</taxon>
    </lineage>
</organism>
<sequence length="287" mass="32438">MTQKEIWYETLHANFGQYFSVENVLYREKTEHQDLVIFENPVLGRVMALDGVVQTTERDEFIYHEMMTHVPLLAHGQAKKVLIIGGGDGAMLREVSRHQGVEQITMVEIDAGVVEFCRQYLPNHNAGAYDDPRFKLVIDDGVNFVNQTDEKFDVIISDCTDPIGPGESLFTSAFYEGCARCLNEGGIFVAQNGVCFLQQDEAVNSHTRLSQYFKDVSFYQAAIPTYYGGIMTFAWASQDPALRQLDLTTLQHRFHQSGLNCRYYNPAIHAGSFALPQYLLDALNVSR</sequence>
<feature type="chain" id="PRO_1000058554" description="Polyamine aminopropyltransferase">
    <location>
        <begin position="1"/>
        <end position="287"/>
    </location>
</feature>
<feature type="domain" description="PABS" evidence="1">
    <location>
        <begin position="5"/>
        <end position="238"/>
    </location>
</feature>
<feature type="active site" description="Proton acceptor" evidence="1">
    <location>
        <position position="158"/>
    </location>
</feature>
<feature type="binding site" evidence="1">
    <location>
        <position position="33"/>
    </location>
    <ligand>
        <name>S-methyl-5'-thioadenosine</name>
        <dbReference type="ChEBI" id="CHEBI:17509"/>
    </ligand>
</feature>
<feature type="binding site" evidence="1">
    <location>
        <position position="64"/>
    </location>
    <ligand>
        <name>spermidine</name>
        <dbReference type="ChEBI" id="CHEBI:57834"/>
    </ligand>
</feature>
<feature type="binding site" evidence="1">
    <location>
        <position position="88"/>
    </location>
    <ligand>
        <name>spermidine</name>
        <dbReference type="ChEBI" id="CHEBI:57834"/>
    </ligand>
</feature>
<feature type="binding site" evidence="1">
    <location>
        <position position="108"/>
    </location>
    <ligand>
        <name>S-methyl-5'-thioadenosine</name>
        <dbReference type="ChEBI" id="CHEBI:17509"/>
    </ligand>
</feature>
<feature type="binding site" evidence="1">
    <location>
        <begin position="140"/>
        <end position="141"/>
    </location>
    <ligand>
        <name>S-methyl-5'-thioadenosine</name>
        <dbReference type="ChEBI" id="CHEBI:17509"/>
    </ligand>
</feature>
<feature type="binding site" evidence="1">
    <location>
        <begin position="158"/>
        <end position="161"/>
    </location>
    <ligand>
        <name>spermidine</name>
        <dbReference type="ChEBI" id="CHEBI:57834"/>
    </ligand>
</feature>
<feature type="binding site" evidence="1">
    <location>
        <position position="165"/>
    </location>
    <ligand>
        <name>S-methyl-5'-thioadenosine</name>
        <dbReference type="ChEBI" id="CHEBI:17509"/>
    </ligand>
</feature>
<keyword id="KW-0963">Cytoplasm</keyword>
<keyword id="KW-0620">Polyamine biosynthesis</keyword>
<keyword id="KW-0745">Spermidine biosynthesis</keyword>
<keyword id="KW-0808">Transferase</keyword>
<evidence type="ECO:0000255" key="1">
    <source>
        <dbReference type="HAMAP-Rule" id="MF_00198"/>
    </source>
</evidence>
<reference key="1">
    <citation type="submission" date="2007-09" db="EMBL/GenBank/DDBJ databases">
        <title>Complete sequence of chromosome of Serratia proteamaculans 568.</title>
        <authorList>
            <consortium name="US DOE Joint Genome Institute"/>
            <person name="Copeland A."/>
            <person name="Lucas S."/>
            <person name="Lapidus A."/>
            <person name="Barry K."/>
            <person name="Glavina del Rio T."/>
            <person name="Dalin E."/>
            <person name="Tice H."/>
            <person name="Pitluck S."/>
            <person name="Chain P."/>
            <person name="Malfatti S."/>
            <person name="Shin M."/>
            <person name="Vergez L."/>
            <person name="Schmutz J."/>
            <person name="Larimer F."/>
            <person name="Land M."/>
            <person name="Hauser L."/>
            <person name="Kyrpides N."/>
            <person name="Kim E."/>
            <person name="Taghavi S."/>
            <person name="Newman L."/>
            <person name="Vangronsveld J."/>
            <person name="van der Lelie D."/>
            <person name="Richardson P."/>
        </authorList>
    </citation>
    <scope>NUCLEOTIDE SEQUENCE [LARGE SCALE GENOMIC DNA]</scope>
    <source>
        <strain>568</strain>
    </source>
</reference>